<feature type="chain" id="PRO_0000441854" description="Mu-theraphotoxin-Osp1b" evidence="2">
    <location>
        <begin position="1"/>
        <end position="33"/>
    </location>
</feature>
<feature type="disulfide bond" evidence="1">
    <location>
        <begin position="2"/>
        <end position="17"/>
    </location>
</feature>
<feature type="disulfide bond" evidence="1">
    <location>
        <begin position="9"/>
        <end position="22"/>
    </location>
</feature>
<feature type="disulfide bond" evidence="1">
    <location>
        <begin position="16"/>
        <end position="29"/>
    </location>
</feature>
<accession>P0DP96</accession>
<evidence type="ECO:0000250" key="1">
    <source>
        <dbReference type="UniProtKB" id="D2Y232"/>
    </source>
</evidence>
<evidence type="ECO:0000269" key="2">
    <source>
    </source>
</evidence>
<evidence type="ECO:0000303" key="3">
    <source>
    </source>
</evidence>
<evidence type="ECO:0000305" key="4"/>
<evidence type="ECO:0000305" key="5">
    <source>
    </source>
</evidence>
<protein>
    <recommendedName>
        <fullName evidence="3">Mu-theraphotoxin-Osp1b</fullName>
        <shortName evidence="3">Mu-TRTX-Osp1b</shortName>
    </recommendedName>
</protein>
<name>OSP1B_ORPS1</name>
<comment type="function">
    <text evidence="2">Voltage-gated sodium channel Nav1.7/SCN9A inhibitor.</text>
</comment>
<comment type="subcellular location">
    <subcellularLocation>
        <location evidence="2">Secreted</location>
    </subcellularLocation>
</comment>
<comment type="tissue specificity">
    <text evidence="5">Expressed by the venom gland.</text>
</comment>
<comment type="domain">
    <text evidence="1">The presence of a 'disulfide through disulfide knot' structurally defines this protein as a knottin.</text>
</comment>
<comment type="mass spectrometry" mass="3963.5" method="MALDI" evidence="2">
    <text>Monoisotopic mass.</text>
</comment>
<comment type="similarity">
    <text evidence="4">Belongs to the neurotoxin 10 (Hwtx-1) family. 22 (Htx-4) subfamily.</text>
</comment>
<reference key="1">
    <citation type="journal article" date="2015" name="Br. J. Pharmacol.">
        <title>Seven novel modulators of the analgesic target NaV 1.7 uncovered using a high-throughput venom-based discovery approach.</title>
        <authorList>
            <person name="Klint J.K."/>
            <person name="Smith J.J."/>
            <person name="Vetter I."/>
            <person name="Rupasinghe D.B."/>
            <person name="Er S.Y."/>
            <person name="Senff S."/>
            <person name="Herzig V."/>
            <person name="Mobli M."/>
            <person name="Lewis R.J."/>
            <person name="Bosmans F."/>
            <person name="King G.F."/>
        </authorList>
    </citation>
    <scope>PROTEIN SEQUENCE</scope>
    <scope>FUNCTION</scope>
    <scope>MASS SPECTROMETRY</scope>
    <scope>SUBCELLULAR LOCATION</scope>
    <source>
        <tissue>Venom</tissue>
    </source>
</reference>
<organism>
    <name type="scientific">Orphnaecus sp. (strain Maanghit-Cave/Philippines)</name>
    <name type="common">Tarantula spider</name>
    <dbReference type="NCBI Taxonomy" id="2024661"/>
    <lineage>
        <taxon>Eukaryota</taxon>
        <taxon>Metazoa</taxon>
        <taxon>Ecdysozoa</taxon>
        <taxon>Arthropoda</taxon>
        <taxon>Chelicerata</taxon>
        <taxon>Arachnida</taxon>
        <taxon>Araneae</taxon>
        <taxon>Mygalomorphae</taxon>
        <taxon>Theraphosidae</taxon>
        <taxon>Orphnaecus</taxon>
    </lineage>
</organism>
<dbReference type="SMR" id="P0DP96"/>
<dbReference type="GO" id="GO:0005576">
    <property type="term" value="C:extracellular region"/>
    <property type="evidence" value="ECO:0007669"/>
    <property type="project" value="UniProtKB-SubCell"/>
</dbReference>
<dbReference type="GO" id="GO:0008200">
    <property type="term" value="F:ion channel inhibitor activity"/>
    <property type="evidence" value="ECO:0007669"/>
    <property type="project" value="InterPro"/>
</dbReference>
<dbReference type="GO" id="GO:0017080">
    <property type="term" value="F:sodium channel regulator activity"/>
    <property type="evidence" value="ECO:0007669"/>
    <property type="project" value="UniProtKB-KW"/>
</dbReference>
<dbReference type="GO" id="GO:0090729">
    <property type="term" value="F:toxin activity"/>
    <property type="evidence" value="ECO:0007669"/>
    <property type="project" value="UniProtKB-KW"/>
</dbReference>
<dbReference type="InterPro" id="IPR011696">
    <property type="entry name" value="Huwentoxin-1"/>
</dbReference>
<dbReference type="Pfam" id="PF07740">
    <property type="entry name" value="Toxin_12"/>
    <property type="match status" value="1"/>
</dbReference>
<dbReference type="SUPFAM" id="SSF57059">
    <property type="entry name" value="omega toxin-like"/>
    <property type="match status" value="1"/>
</dbReference>
<proteinExistence type="evidence at protein level"/>
<sequence length="33" mass="3973">ECLGWMKGCEPKNNKCCSSYVCTYKYPWCRYDL</sequence>
<keyword id="KW-0903">Direct protein sequencing</keyword>
<keyword id="KW-1015">Disulfide bond</keyword>
<keyword id="KW-0872">Ion channel impairing toxin</keyword>
<keyword id="KW-0960">Knottin</keyword>
<keyword id="KW-0528">Neurotoxin</keyword>
<keyword id="KW-0964">Secreted</keyword>
<keyword id="KW-0800">Toxin</keyword>
<keyword id="KW-0738">Voltage-gated sodium channel impairing toxin</keyword>